<accession>A9MI98</accession>
<protein>
    <recommendedName>
        <fullName evidence="1">Protein FdhE</fullName>
    </recommendedName>
</protein>
<name>FDHE_SALAR</name>
<dbReference type="EMBL" id="CP000880">
    <property type="protein sequence ID" value="ABX23444.1"/>
    <property type="molecule type" value="Genomic_DNA"/>
</dbReference>
<dbReference type="SMR" id="A9MI98"/>
<dbReference type="STRING" id="41514.SARI_03633"/>
<dbReference type="KEGG" id="ses:SARI_03633"/>
<dbReference type="HOGENOM" id="CLU_055275_0_0_6"/>
<dbReference type="Proteomes" id="UP000002084">
    <property type="component" value="Chromosome"/>
</dbReference>
<dbReference type="GO" id="GO:0005829">
    <property type="term" value="C:cytosol"/>
    <property type="evidence" value="ECO:0007669"/>
    <property type="project" value="TreeGrafter"/>
</dbReference>
<dbReference type="GO" id="GO:0008199">
    <property type="term" value="F:ferric iron binding"/>
    <property type="evidence" value="ECO:0007669"/>
    <property type="project" value="TreeGrafter"/>
</dbReference>
<dbReference type="GO" id="GO:0051604">
    <property type="term" value="P:protein maturation"/>
    <property type="evidence" value="ECO:0007669"/>
    <property type="project" value="TreeGrafter"/>
</dbReference>
<dbReference type="CDD" id="cd16341">
    <property type="entry name" value="FdhE"/>
    <property type="match status" value="1"/>
</dbReference>
<dbReference type="FunFam" id="3.90.1670.10:FF:000001">
    <property type="entry name" value="Protein FdhE"/>
    <property type="match status" value="1"/>
</dbReference>
<dbReference type="Gene3D" id="3.90.1670.10">
    <property type="entry name" value="FdhE-like domain"/>
    <property type="match status" value="1"/>
</dbReference>
<dbReference type="HAMAP" id="MF_00611">
    <property type="entry name" value="FdeH"/>
    <property type="match status" value="1"/>
</dbReference>
<dbReference type="InterPro" id="IPR024064">
    <property type="entry name" value="FdhE-like_sf"/>
</dbReference>
<dbReference type="InterPro" id="IPR056796">
    <property type="entry name" value="FdhE_C"/>
</dbReference>
<dbReference type="InterPro" id="IPR056797">
    <property type="entry name" value="FdhE_central"/>
</dbReference>
<dbReference type="InterPro" id="IPR056774">
    <property type="entry name" value="FdhE_N"/>
</dbReference>
<dbReference type="InterPro" id="IPR006452">
    <property type="entry name" value="Formate_DH_accessory"/>
</dbReference>
<dbReference type="NCBIfam" id="TIGR01562">
    <property type="entry name" value="FdhE"/>
    <property type="match status" value="1"/>
</dbReference>
<dbReference type="NCBIfam" id="NF002925">
    <property type="entry name" value="PRK03564.1"/>
    <property type="match status" value="1"/>
</dbReference>
<dbReference type="PANTHER" id="PTHR37689">
    <property type="entry name" value="PROTEIN FDHE"/>
    <property type="match status" value="1"/>
</dbReference>
<dbReference type="PANTHER" id="PTHR37689:SF1">
    <property type="entry name" value="PROTEIN FDHE"/>
    <property type="match status" value="1"/>
</dbReference>
<dbReference type="Pfam" id="PF24860">
    <property type="entry name" value="FdhE_C"/>
    <property type="match status" value="1"/>
</dbReference>
<dbReference type="Pfam" id="PF24859">
    <property type="entry name" value="FdhE_central"/>
    <property type="match status" value="1"/>
</dbReference>
<dbReference type="Pfam" id="PF04216">
    <property type="entry name" value="FdhE_N"/>
    <property type="match status" value="1"/>
</dbReference>
<dbReference type="PIRSF" id="PIRSF018296">
    <property type="entry name" value="Format_dh_formtn"/>
    <property type="match status" value="1"/>
</dbReference>
<dbReference type="SUPFAM" id="SSF144020">
    <property type="entry name" value="FdhE-like"/>
    <property type="match status" value="1"/>
</dbReference>
<proteinExistence type="inferred from homology"/>
<comment type="function">
    <text evidence="1">Necessary for formate dehydrogenase activity.</text>
</comment>
<comment type="subcellular location">
    <subcellularLocation>
        <location evidence="1">Cytoplasm</location>
    </subcellularLocation>
</comment>
<comment type="similarity">
    <text evidence="1">Belongs to the FdhE family.</text>
</comment>
<evidence type="ECO:0000255" key="1">
    <source>
        <dbReference type="HAMAP-Rule" id="MF_00611"/>
    </source>
</evidence>
<keyword id="KW-0963">Cytoplasm</keyword>
<keyword id="KW-1185">Reference proteome</keyword>
<organism>
    <name type="scientific">Salmonella arizonae (strain ATCC BAA-731 / CDC346-86 / RSK2980)</name>
    <dbReference type="NCBI Taxonomy" id="41514"/>
    <lineage>
        <taxon>Bacteria</taxon>
        <taxon>Pseudomonadati</taxon>
        <taxon>Pseudomonadota</taxon>
        <taxon>Gammaproteobacteria</taxon>
        <taxon>Enterobacterales</taxon>
        <taxon>Enterobacteriaceae</taxon>
        <taxon>Salmonella</taxon>
    </lineage>
</organism>
<feature type="chain" id="PRO_1000082571" description="Protein FdhE">
    <location>
        <begin position="1"/>
        <end position="309"/>
    </location>
</feature>
<reference key="1">
    <citation type="submission" date="2007-11" db="EMBL/GenBank/DDBJ databases">
        <authorList>
            <consortium name="The Salmonella enterica serovar Arizonae Genome Sequencing Project"/>
            <person name="McClelland M."/>
            <person name="Sanderson E.K."/>
            <person name="Porwollik S."/>
            <person name="Spieth J."/>
            <person name="Clifton W.S."/>
            <person name="Fulton R."/>
            <person name="Chunyan W."/>
            <person name="Wollam A."/>
            <person name="Shah N."/>
            <person name="Pepin K."/>
            <person name="Bhonagiri V."/>
            <person name="Nash W."/>
            <person name="Johnson M."/>
            <person name="Thiruvilangam P."/>
            <person name="Wilson R."/>
        </authorList>
    </citation>
    <scope>NUCLEOTIDE SEQUENCE [LARGE SCALE GENOMIC DNA]</scope>
    <source>
        <strain>ATCC BAA-731 / CDC346-86 / RSK2980</strain>
    </source>
</reference>
<gene>
    <name evidence="1" type="primary">fdhE</name>
    <name type="ordered locus">SARI_03633</name>
</gene>
<sequence length="309" mass="34813">MSIRIIPQDELGSSEKRTADMIPPLLFPRLKNVYNRRAERLRELAESNPLGDYLRFAALIAHAQEVVLYDHPLEMDLTARIKEANEQGKPPLDIHVLPRDKHWQKLLHSLIAELKPEMSGPALAVIENLEKASDQELEQMASALFDSDFSYVSSDKAPFIWAALSLYWAQMASLIPGKARAEYGEARQYCPVCGSMPVSSVVQIGTTQGLRYLHCNLCETEWHVVRVKCSNCEQSRDLHYWSLENEQAAVKTESCGDCGTYLKILYQEKDPKVEAVADDLASLVLDARMEQEGFARSSINPFLFPGEGE</sequence>